<name>NADE_SHEON</name>
<reference key="1">
    <citation type="journal article" date="2002" name="Nat. Biotechnol.">
        <title>Genome sequence of the dissimilatory metal ion-reducing bacterium Shewanella oneidensis.</title>
        <authorList>
            <person name="Heidelberg J.F."/>
            <person name="Paulsen I.T."/>
            <person name="Nelson K.E."/>
            <person name="Gaidos E.J."/>
            <person name="Nelson W.C."/>
            <person name="Read T.D."/>
            <person name="Eisen J.A."/>
            <person name="Seshadri R."/>
            <person name="Ward N.L."/>
            <person name="Methe B.A."/>
            <person name="Clayton R.A."/>
            <person name="Meyer T."/>
            <person name="Tsapin A."/>
            <person name="Scott J."/>
            <person name="Beanan M.J."/>
            <person name="Brinkac L.M."/>
            <person name="Daugherty S.C."/>
            <person name="DeBoy R.T."/>
            <person name="Dodson R.J."/>
            <person name="Durkin A.S."/>
            <person name="Haft D.H."/>
            <person name="Kolonay J.F."/>
            <person name="Madupu R."/>
            <person name="Peterson J.D."/>
            <person name="Umayam L.A."/>
            <person name="White O."/>
            <person name="Wolf A.M."/>
            <person name="Vamathevan J.J."/>
            <person name="Weidman J.F."/>
            <person name="Impraim M."/>
            <person name="Lee K."/>
            <person name="Berry K.J."/>
            <person name="Lee C."/>
            <person name="Mueller J."/>
            <person name="Khouri H.M."/>
            <person name="Gill J."/>
            <person name="Utterback T.R."/>
            <person name="McDonald L.A."/>
            <person name="Feldblyum T.V."/>
            <person name="Smith H.O."/>
            <person name="Venter J.C."/>
            <person name="Nealson K.H."/>
            <person name="Fraser C.M."/>
        </authorList>
    </citation>
    <scope>NUCLEOTIDE SEQUENCE [LARGE SCALE GENOMIC DNA]</scope>
    <source>
        <strain>ATCC 700550 / JCM 31522 / CIP 106686 / LMG 19005 / NCIMB 14063 / MR-1</strain>
    </source>
</reference>
<gene>
    <name evidence="1" type="primary">nadE</name>
    <name type="ordered locus">SO_2021</name>
</gene>
<keyword id="KW-0067">ATP-binding</keyword>
<keyword id="KW-0436">Ligase</keyword>
<keyword id="KW-0460">Magnesium</keyword>
<keyword id="KW-0479">Metal-binding</keyword>
<keyword id="KW-0520">NAD</keyword>
<keyword id="KW-0547">Nucleotide-binding</keyword>
<keyword id="KW-1185">Reference proteome</keyword>
<proteinExistence type="inferred from homology"/>
<evidence type="ECO:0000255" key="1">
    <source>
        <dbReference type="HAMAP-Rule" id="MF_00193"/>
    </source>
</evidence>
<protein>
    <recommendedName>
        <fullName evidence="1">NH(3)-dependent NAD(+) synthetase</fullName>
        <ecNumber evidence="1">6.3.1.5</ecNumber>
    </recommendedName>
</protein>
<organism>
    <name type="scientific">Shewanella oneidensis (strain ATCC 700550 / JCM 31522 / CIP 106686 / LMG 19005 / NCIMB 14063 / MR-1)</name>
    <dbReference type="NCBI Taxonomy" id="211586"/>
    <lineage>
        <taxon>Bacteria</taxon>
        <taxon>Pseudomonadati</taxon>
        <taxon>Pseudomonadota</taxon>
        <taxon>Gammaproteobacteria</taxon>
        <taxon>Alteromonadales</taxon>
        <taxon>Shewanellaceae</taxon>
        <taxon>Shewanella</taxon>
    </lineage>
</organism>
<accession>Q8EFF2</accession>
<sequence>MKAQILREMKVLKAIEPEFEVQRRVAFIKTKLKEARSKALVLGISGGVDSSTAGRLCQLAINSLNSEHPEGGYQFIAVRLPYQIQKDEHEAQQACQFIQPSKLVTVNVHQGVDGVHQATLSAFIDAGLTTPDAAKVDFIKGNVKARMRMIAQYELAGLVGGLVVGTDHSAENITGFYTKWGDGACDLAPLFGLNKRQVRQLAAYLGAPESLVYKAPTADLEDNKPLLEDEVALGLTYEQIDDFLEGKVVDKAVEEKLINIYKATQHKRQPIPTIYD</sequence>
<dbReference type="EC" id="6.3.1.5" evidence="1"/>
<dbReference type="EMBL" id="AE014299">
    <property type="protein sequence ID" value="AAN55071.1"/>
    <property type="molecule type" value="Genomic_DNA"/>
</dbReference>
<dbReference type="RefSeq" id="NP_717627.1">
    <property type="nucleotide sequence ID" value="NC_004347.2"/>
</dbReference>
<dbReference type="RefSeq" id="WP_011072105.1">
    <property type="nucleotide sequence ID" value="NC_004347.2"/>
</dbReference>
<dbReference type="SMR" id="Q8EFF2"/>
<dbReference type="STRING" id="211586.SO_2021"/>
<dbReference type="PaxDb" id="211586-SO_2021"/>
<dbReference type="KEGG" id="son:SO_2021"/>
<dbReference type="PATRIC" id="fig|211586.12.peg.1940"/>
<dbReference type="eggNOG" id="COG0171">
    <property type="taxonomic scope" value="Bacteria"/>
</dbReference>
<dbReference type="HOGENOM" id="CLU_059327_3_0_6"/>
<dbReference type="OrthoDB" id="3266517at2"/>
<dbReference type="PhylomeDB" id="Q8EFF2"/>
<dbReference type="BioCyc" id="SONE211586:G1GMP-1863-MONOMER"/>
<dbReference type="UniPathway" id="UPA00253">
    <property type="reaction ID" value="UER00333"/>
</dbReference>
<dbReference type="Proteomes" id="UP000008186">
    <property type="component" value="Chromosome"/>
</dbReference>
<dbReference type="GO" id="GO:0005737">
    <property type="term" value="C:cytoplasm"/>
    <property type="evidence" value="ECO:0000318"/>
    <property type="project" value="GO_Central"/>
</dbReference>
<dbReference type="GO" id="GO:0005524">
    <property type="term" value="F:ATP binding"/>
    <property type="evidence" value="ECO:0007669"/>
    <property type="project" value="UniProtKB-UniRule"/>
</dbReference>
<dbReference type="GO" id="GO:0004359">
    <property type="term" value="F:glutaminase activity"/>
    <property type="evidence" value="ECO:0007669"/>
    <property type="project" value="InterPro"/>
</dbReference>
<dbReference type="GO" id="GO:0046872">
    <property type="term" value="F:metal ion binding"/>
    <property type="evidence" value="ECO:0007669"/>
    <property type="project" value="UniProtKB-KW"/>
</dbReference>
<dbReference type="GO" id="GO:0003952">
    <property type="term" value="F:NAD+ synthase (glutamine-hydrolyzing) activity"/>
    <property type="evidence" value="ECO:0007669"/>
    <property type="project" value="InterPro"/>
</dbReference>
<dbReference type="GO" id="GO:0008795">
    <property type="term" value="F:NAD+ synthase activity"/>
    <property type="evidence" value="ECO:0007669"/>
    <property type="project" value="UniProtKB-UniRule"/>
</dbReference>
<dbReference type="GO" id="GO:0009435">
    <property type="term" value="P:NAD biosynthetic process"/>
    <property type="evidence" value="ECO:0000318"/>
    <property type="project" value="GO_Central"/>
</dbReference>
<dbReference type="CDD" id="cd00553">
    <property type="entry name" value="NAD_synthase"/>
    <property type="match status" value="1"/>
</dbReference>
<dbReference type="FunFam" id="3.40.50.620:FF:000015">
    <property type="entry name" value="NH(3)-dependent NAD(+) synthetase"/>
    <property type="match status" value="1"/>
</dbReference>
<dbReference type="Gene3D" id="3.40.50.620">
    <property type="entry name" value="HUPs"/>
    <property type="match status" value="1"/>
</dbReference>
<dbReference type="HAMAP" id="MF_00193">
    <property type="entry name" value="NadE_ammonia_dep"/>
    <property type="match status" value="1"/>
</dbReference>
<dbReference type="InterPro" id="IPR022310">
    <property type="entry name" value="NAD/GMP_synthase"/>
</dbReference>
<dbReference type="InterPro" id="IPR003694">
    <property type="entry name" value="NAD_synthase"/>
</dbReference>
<dbReference type="InterPro" id="IPR022926">
    <property type="entry name" value="NH(3)-dep_NAD(+)_synth"/>
</dbReference>
<dbReference type="InterPro" id="IPR014729">
    <property type="entry name" value="Rossmann-like_a/b/a_fold"/>
</dbReference>
<dbReference type="NCBIfam" id="TIGR00552">
    <property type="entry name" value="nadE"/>
    <property type="match status" value="1"/>
</dbReference>
<dbReference type="NCBIfam" id="NF001979">
    <property type="entry name" value="PRK00768.1"/>
    <property type="match status" value="1"/>
</dbReference>
<dbReference type="PANTHER" id="PTHR23090">
    <property type="entry name" value="NH 3 /GLUTAMINE-DEPENDENT NAD + SYNTHETASE"/>
    <property type="match status" value="1"/>
</dbReference>
<dbReference type="PANTHER" id="PTHR23090:SF7">
    <property type="entry name" value="NH(3)-DEPENDENT NAD(+) SYNTHETASE"/>
    <property type="match status" value="1"/>
</dbReference>
<dbReference type="Pfam" id="PF02540">
    <property type="entry name" value="NAD_synthase"/>
    <property type="match status" value="1"/>
</dbReference>
<dbReference type="SUPFAM" id="SSF52402">
    <property type="entry name" value="Adenine nucleotide alpha hydrolases-like"/>
    <property type="match status" value="1"/>
</dbReference>
<feature type="chain" id="PRO_0000152192" description="NH(3)-dependent NAD(+) synthetase">
    <location>
        <begin position="1"/>
        <end position="276"/>
    </location>
</feature>
<feature type="binding site" evidence="1">
    <location>
        <begin position="43"/>
        <end position="50"/>
    </location>
    <ligand>
        <name>ATP</name>
        <dbReference type="ChEBI" id="CHEBI:30616"/>
    </ligand>
</feature>
<feature type="binding site" evidence="1">
    <location>
        <position position="49"/>
    </location>
    <ligand>
        <name>Mg(2+)</name>
        <dbReference type="ChEBI" id="CHEBI:18420"/>
    </ligand>
</feature>
<feature type="binding site" evidence="1">
    <location>
        <position position="146"/>
    </location>
    <ligand>
        <name>deamido-NAD(+)</name>
        <dbReference type="ChEBI" id="CHEBI:58437"/>
    </ligand>
</feature>
<feature type="binding site" evidence="1">
    <location>
        <position position="166"/>
    </location>
    <ligand>
        <name>ATP</name>
        <dbReference type="ChEBI" id="CHEBI:30616"/>
    </ligand>
</feature>
<feature type="binding site" evidence="1">
    <location>
        <position position="171"/>
    </location>
    <ligand>
        <name>Mg(2+)</name>
        <dbReference type="ChEBI" id="CHEBI:18420"/>
    </ligand>
</feature>
<feature type="binding site" evidence="1">
    <location>
        <position position="179"/>
    </location>
    <ligand>
        <name>deamido-NAD(+)</name>
        <dbReference type="ChEBI" id="CHEBI:58437"/>
    </ligand>
</feature>
<feature type="binding site" evidence="1">
    <location>
        <position position="186"/>
    </location>
    <ligand>
        <name>deamido-NAD(+)</name>
        <dbReference type="ChEBI" id="CHEBI:58437"/>
    </ligand>
</feature>
<feature type="binding site" evidence="1">
    <location>
        <position position="195"/>
    </location>
    <ligand>
        <name>ATP</name>
        <dbReference type="ChEBI" id="CHEBI:30616"/>
    </ligand>
</feature>
<feature type="binding site" evidence="1">
    <location>
        <position position="217"/>
    </location>
    <ligand>
        <name>ATP</name>
        <dbReference type="ChEBI" id="CHEBI:30616"/>
    </ligand>
</feature>
<feature type="binding site" evidence="1">
    <location>
        <begin position="266"/>
        <end position="267"/>
    </location>
    <ligand>
        <name>deamido-NAD(+)</name>
        <dbReference type="ChEBI" id="CHEBI:58437"/>
    </ligand>
</feature>
<comment type="function">
    <text evidence="1">Catalyzes the ATP-dependent amidation of deamido-NAD to form NAD. Uses ammonia as a nitrogen source.</text>
</comment>
<comment type="catalytic activity">
    <reaction evidence="1">
        <text>deamido-NAD(+) + NH4(+) + ATP = AMP + diphosphate + NAD(+) + H(+)</text>
        <dbReference type="Rhea" id="RHEA:21188"/>
        <dbReference type="ChEBI" id="CHEBI:15378"/>
        <dbReference type="ChEBI" id="CHEBI:28938"/>
        <dbReference type="ChEBI" id="CHEBI:30616"/>
        <dbReference type="ChEBI" id="CHEBI:33019"/>
        <dbReference type="ChEBI" id="CHEBI:57540"/>
        <dbReference type="ChEBI" id="CHEBI:58437"/>
        <dbReference type="ChEBI" id="CHEBI:456215"/>
        <dbReference type="EC" id="6.3.1.5"/>
    </reaction>
</comment>
<comment type="pathway">
    <text evidence="1">Cofactor biosynthesis; NAD(+) biosynthesis; NAD(+) from deamido-NAD(+) (ammonia route): step 1/1.</text>
</comment>
<comment type="subunit">
    <text evidence="1">Homodimer.</text>
</comment>
<comment type="similarity">
    <text evidence="1">Belongs to the NAD synthetase family.</text>
</comment>